<name>LOLB_PSEPW</name>
<comment type="function">
    <text evidence="1">Plays a critical role in the incorporation of lipoproteins in the outer membrane after they are released by the LolA protein.</text>
</comment>
<comment type="subunit">
    <text evidence="1">Monomer.</text>
</comment>
<comment type="subcellular location">
    <subcellularLocation>
        <location evidence="1">Cell outer membrane</location>
        <topology evidence="1">Lipid-anchor</topology>
    </subcellularLocation>
</comment>
<comment type="similarity">
    <text evidence="1">Belongs to the LolB family.</text>
</comment>
<accession>B1JEP9</accession>
<keyword id="KW-0998">Cell outer membrane</keyword>
<keyword id="KW-0143">Chaperone</keyword>
<keyword id="KW-0449">Lipoprotein</keyword>
<keyword id="KW-0472">Membrane</keyword>
<keyword id="KW-0564">Palmitate</keyword>
<keyword id="KW-0653">Protein transport</keyword>
<keyword id="KW-0732">Signal</keyword>
<keyword id="KW-0813">Transport</keyword>
<sequence length="205" mass="22923">MFLRHCITFTLIALLAGCAGFGSREALQGHGDPQQWRAHKEQLSSLDGWQINGKVGIRAPRDSGSGTLFWLQRQDYYDIRLAGPLGRGAARLTGRPGGVVLEVANQGRYEAASPEALLEEQLGWQLPVSHLVWWVRGLPAPDSKSKLTLDGDSRLASLDQDGWQVQYLSYTEQNGYWLPERLKLHGKDLDVTLVVKDWQPRQLGH</sequence>
<evidence type="ECO:0000255" key="1">
    <source>
        <dbReference type="HAMAP-Rule" id="MF_00233"/>
    </source>
</evidence>
<protein>
    <recommendedName>
        <fullName evidence="1">Outer-membrane lipoprotein LolB</fullName>
    </recommendedName>
</protein>
<organism>
    <name type="scientific">Pseudomonas putida (strain W619)</name>
    <dbReference type="NCBI Taxonomy" id="390235"/>
    <lineage>
        <taxon>Bacteria</taxon>
        <taxon>Pseudomonadati</taxon>
        <taxon>Pseudomonadota</taxon>
        <taxon>Gammaproteobacteria</taxon>
        <taxon>Pseudomonadales</taxon>
        <taxon>Pseudomonadaceae</taxon>
        <taxon>Pseudomonas</taxon>
    </lineage>
</organism>
<reference key="1">
    <citation type="submission" date="2008-02" db="EMBL/GenBank/DDBJ databases">
        <title>Complete sequence of Pseudomonas putida W619.</title>
        <authorList>
            <person name="Copeland A."/>
            <person name="Lucas S."/>
            <person name="Lapidus A."/>
            <person name="Barry K."/>
            <person name="Detter J.C."/>
            <person name="Glavina del Rio T."/>
            <person name="Dalin E."/>
            <person name="Tice H."/>
            <person name="Pitluck S."/>
            <person name="Chain P."/>
            <person name="Malfatti S."/>
            <person name="Shin M."/>
            <person name="Vergez L."/>
            <person name="Schmutz J."/>
            <person name="Larimer F."/>
            <person name="Land M."/>
            <person name="Hauser L."/>
            <person name="Kyrpides N."/>
            <person name="Kim E."/>
            <person name="Taghavi S."/>
            <person name="Vangronsveld D."/>
            <person name="van der Lelie D."/>
            <person name="Richardson P."/>
        </authorList>
    </citation>
    <scope>NUCLEOTIDE SEQUENCE [LARGE SCALE GENOMIC DNA]</scope>
    <source>
        <strain>W619</strain>
    </source>
</reference>
<dbReference type="EMBL" id="CP000949">
    <property type="protein sequence ID" value="ACA74939.1"/>
    <property type="molecule type" value="Genomic_DNA"/>
</dbReference>
<dbReference type="SMR" id="B1JEP9"/>
<dbReference type="STRING" id="390235.PputW619_4459"/>
<dbReference type="KEGG" id="ppw:PputW619_4459"/>
<dbReference type="eggNOG" id="COG3017">
    <property type="taxonomic scope" value="Bacteria"/>
</dbReference>
<dbReference type="HOGENOM" id="CLU_092816_2_1_6"/>
<dbReference type="OrthoDB" id="9797618at2"/>
<dbReference type="GO" id="GO:0009279">
    <property type="term" value="C:cell outer membrane"/>
    <property type="evidence" value="ECO:0007669"/>
    <property type="project" value="UniProtKB-SubCell"/>
</dbReference>
<dbReference type="GO" id="GO:0044874">
    <property type="term" value="P:lipoprotein localization to outer membrane"/>
    <property type="evidence" value="ECO:0007669"/>
    <property type="project" value="UniProtKB-UniRule"/>
</dbReference>
<dbReference type="GO" id="GO:0015031">
    <property type="term" value="P:protein transport"/>
    <property type="evidence" value="ECO:0007669"/>
    <property type="project" value="UniProtKB-KW"/>
</dbReference>
<dbReference type="CDD" id="cd16326">
    <property type="entry name" value="LolB"/>
    <property type="match status" value="1"/>
</dbReference>
<dbReference type="Gene3D" id="2.50.20.10">
    <property type="entry name" value="Lipoprotein localisation LolA/LolB/LppX"/>
    <property type="match status" value="1"/>
</dbReference>
<dbReference type="HAMAP" id="MF_00233">
    <property type="entry name" value="LolB"/>
    <property type="match status" value="1"/>
</dbReference>
<dbReference type="InterPro" id="IPR029046">
    <property type="entry name" value="LolA/LolB/LppX"/>
</dbReference>
<dbReference type="InterPro" id="IPR004565">
    <property type="entry name" value="OM_lipoprot_LolB"/>
</dbReference>
<dbReference type="NCBIfam" id="TIGR00548">
    <property type="entry name" value="lolB"/>
    <property type="match status" value="1"/>
</dbReference>
<dbReference type="Pfam" id="PF03550">
    <property type="entry name" value="LolB"/>
    <property type="match status" value="1"/>
</dbReference>
<dbReference type="SUPFAM" id="SSF89392">
    <property type="entry name" value="Prokaryotic lipoproteins and lipoprotein localization factors"/>
    <property type="match status" value="1"/>
</dbReference>
<dbReference type="PROSITE" id="PS51257">
    <property type="entry name" value="PROKAR_LIPOPROTEIN"/>
    <property type="match status" value="1"/>
</dbReference>
<proteinExistence type="inferred from homology"/>
<feature type="signal peptide" evidence="1">
    <location>
        <begin position="1"/>
        <end position="17"/>
    </location>
</feature>
<feature type="chain" id="PRO_1000100500" description="Outer-membrane lipoprotein LolB">
    <location>
        <begin position="18"/>
        <end position="205"/>
    </location>
</feature>
<feature type="lipid moiety-binding region" description="N-palmitoyl cysteine" evidence="1">
    <location>
        <position position="18"/>
    </location>
</feature>
<feature type="lipid moiety-binding region" description="S-diacylglycerol cysteine" evidence="1">
    <location>
        <position position="18"/>
    </location>
</feature>
<gene>
    <name evidence="1" type="primary">lolB</name>
    <name type="ordered locus">PputW619_4459</name>
</gene>